<proteinExistence type="evidence at protein level"/>
<evidence type="ECO:0000255" key="1">
    <source>
        <dbReference type="PROSITE-ProRule" id="PRU01346"/>
    </source>
</evidence>
<evidence type="ECO:0000256" key="2">
    <source>
        <dbReference type="SAM" id="MobiDB-lite"/>
    </source>
</evidence>
<evidence type="ECO:0000269" key="3">
    <source>
    </source>
</evidence>
<evidence type="ECO:0000269" key="4">
    <source>
    </source>
</evidence>
<evidence type="ECO:0000269" key="5">
    <source>
    </source>
</evidence>
<evidence type="ECO:0000269" key="6">
    <source>
    </source>
</evidence>
<evidence type="ECO:0000269" key="7">
    <source>
    </source>
</evidence>
<evidence type="ECO:0000269" key="8">
    <source>
    </source>
</evidence>
<evidence type="ECO:0000269" key="9">
    <source>
    </source>
</evidence>
<evidence type="ECO:0000305" key="10"/>
<evidence type="ECO:0000305" key="11">
    <source>
    </source>
</evidence>
<evidence type="ECO:0007829" key="12">
    <source>
        <dbReference type="PDB" id="4C92"/>
    </source>
</evidence>
<evidence type="ECO:0007829" key="13">
    <source>
        <dbReference type="PDB" id="4M75"/>
    </source>
</evidence>
<comment type="function">
    <text evidence="3 4 5 8 9">Component of the cytoplasmic LSM1-LSM7 complex which is involved in mRNA degradation by activating the decapping step (PubMed:10747033, PubMed:10913177, PubMed:10761922, PubMed:24513854). Together with PAT1, the LSM1-LSM7 complex binds to osmotic stress-activated mRNAs to attenuate the osmotic stress response, probably by limiting ribosome access to the mRNA and consequently translation (PubMed:30059503).</text>
</comment>
<comment type="subunit">
    <text evidence="3 4 5 7 8">Component of the heptameric LSM1-LSM7 complex that forms a seven-membered ring structure with a donut shape (PubMed:10747033, PubMed:24139796, PubMed:24513854). The LSm subunits are arranged in the order LSM1, LSM2, LSM3, LSM6, LSM5, LSM7 and LSM4 (PubMed:24139796). Except for LSM1, where a C-terminal helix crosses the ring structure to form additional interactions with LSM3 and LSM6, each subunit interacts only with its two neighboring subunits (PubMed:24139796). The LSM1-LSM7 complex interacts with PAT1; within the complex PAT1 has direct interactions with LSM2 and LSM3 (PubMed:10747033, PubMed:10913177, PubMed:10761922, PubMed:24139796). The LSM1-LSM7 complex interacts with XRN1 (PubMed:10747033).</text>
</comment>
<comment type="interaction">
    <interactant intactId="EBI-174">
        <id>P47017</id>
    </interactant>
    <interactant intactId="EBI-158">
        <id>P39517</id>
        <label>DHH1</label>
    </interactant>
    <organismsDiffer>false</organismsDiffer>
    <experiments>2</experiments>
</comment>
<comment type="interaction">
    <interactant intactId="EBI-174">
        <id>P47017</id>
    </interactant>
    <interactant intactId="EBI-180">
        <id>P38203</id>
        <label>LSM2</label>
    </interactant>
    <organismsDiffer>false</organismsDiffer>
    <experiments>7</experiments>
</comment>
<comment type="interaction">
    <interactant intactId="EBI-174">
        <id>P47017</id>
    </interactant>
    <interactant intactId="EBI-10227">
        <id>P57743</id>
        <label>LSM3</label>
    </interactant>
    <organismsDiffer>false</organismsDiffer>
    <experiments>5</experiments>
</comment>
<comment type="interaction">
    <interactant intactId="EBI-174">
        <id>P47017</id>
    </interactant>
    <interactant intactId="EBI-188">
        <id>P40070</id>
        <label>LSM4</label>
    </interactant>
    <organismsDiffer>false</organismsDiffer>
    <experiments>5</experiments>
</comment>
<comment type="interaction">
    <interactant intactId="EBI-174">
        <id>P47017</id>
    </interactant>
    <interactant intactId="EBI-10236">
        <id>P40089</id>
        <label>LSM5</label>
    </interactant>
    <organismsDiffer>false</organismsDiffer>
    <experiments>7</experiments>
</comment>
<comment type="interaction">
    <interactant intactId="EBI-174">
        <id>P47017</id>
    </interactant>
    <interactant intactId="EBI-196">
        <id>Q06406</id>
        <label>LSM6</label>
    </interactant>
    <organismsDiffer>false</organismsDiffer>
    <experiments>4</experiments>
</comment>
<comment type="interaction">
    <interactant intactId="EBI-174">
        <id>P47017</id>
    </interactant>
    <interactant intactId="EBI-204">
        <id>P25644</id>
        <label>PAT1</label>
    </interactant>
    <organismsDiffer>false</organismsDiffer>
    <experiments>6</experiments>
</comment>
<comment type="subcellular location">
    <subcellularLocation>
        <location evidence="4">Nucleus</location>
    </subcellularLocation>
    <subcellularLocation>
        <location evidence="4">Cytoplasm</location>
    </subcellularLocation>
    <subcellularLocation>
        <location evidence="11">Cytoplasm</location>
        <location evidence="11">P-body</location>
    </subcellularLocation>
</comment>
<comment type="disruption phenotype">
    <text evidence="9">Increases the level of stress-responsive gene mRNA during osmotic stress.</text>
</comment>
<comment type="miscellaneous">
    <text evidence="6">Present with 3490 molecules/cell in log phase SD medium.</text>
</comment>
<comment type="similarity">
    <text evidence="10">Belongs to the snRNP Sm proteins family.</text>
</comment>
<dbReference type="EMBL" id="Z49399">
    <property type="protein sequence ID" value="CAA89419.1"/>
    <property type="molecule type" value="Genomic_DNA"/>
</dbReference>
<dbReference type="EMBL" id="AY558307">
    <property type="protein sequence ID" value="AAS56633.1"/>
    <property type="molecule type" value="Genomic_DNA"/>
</dbReference>
<dbReference type="EMBL" id="BK006943">
    <property type="protein sequence ID" value="DAA08678.1"/>
    <property type="molecule type" value="Genomic_DNA"/>
</dbReference>
<dbReference type="PIR" id="S56905">
    <property type="entry name" value="S56905"/>
</dbReference>
<dbReference type="RefSeq" id="NP_012411.1">
    <property type="nucleotide sequence ID" value="NM_001181557.1"/>
</dbReference>
<dbReference type="PDB" id="4C8Q">
    <property type="method" value="X-ray"/>
    <property type="resolution" value="3.70 A"/>
    <property type="chains" value="A=45-145"/>
</dbReference>
<dbReference type="PDB" id="4C92">
    <property type="method" value="X-ray"/>
    <property type="resolution" value="2.30 A"/>
    <property type="chains" value="A=27-172"/>
</dbReference>
<dbReference type="PDB" id="4M75">
    <property type="method" value="X-ray"/>
    <property type="resolution" value="2.95 A"/>
    <property type="chains" value="A/H=30-172"/>
</dbReference>
<dbReference type="PDBsum" id="4C8Q"/>
<dbReference type="PDBsum" id="4C92"/>
<dbReference type="PDBsum" id="4M75"/>
<dbReference type="SMR" id="P47017"/>
<dbReference type="BioGRID" id="33632">
    <property type="interactions" value="1167"/>
</dbReference>
<dbReference type="ComplexPortal" id="CPX-112">
    <property type="entry name" value="LSM1-7-PAT1 complex"/>
</dbReference>
<dbReference type="ComplexPortal" id="CPX-45">
    <property type="entry name" value="LSM1-7 complex"/>
</dbReference>
<dbReference type="DIP" id="DIP-1330N"/>
<dbReference type="FunCoup" id="P47017">
    <property type="interactions" value="564"/>
</dbReference>
<dbReference type="IntAct" id="P47017">
    <property type="interactions" value="92"/>
</dbReference>
<dbReference type="MINT" id="P47017"/>
<dbReference type="STRING" id="4932.YJL124C"/>
<dbReference type="MoonDB" id="P47017">
    <property type="type" value="Predicted"/>
</dbReference>
<dbReference type="iPTMnet" id="P47017"/>
<dbReference type="PaxDb" id="4932-YJL124C"/>
<dbReference type="PeptideAtlas" id="P47017"/>
<dbReference type="EnsemblFungi" id="YJL124C_mRNA">
    <property type="protein sequence ID" value="YJL124C"/>
    <property type="gene ID" value="YJL124C"/>
</dbReference>
<dbReference type="GeneID" id="853318"/>
<dbReference type="KEGG" id="sce:YJL124C"/>
<dbReference type="AGR" id="SGD:S000003660"/>
<dbReference type="SGD" id="S000003660">
    <property type="gene designation" value="LSM1"/>
</dbReference>
<dbReference type="VEuPathDB" id="FungiDB:YJL124C"/>
<dbReference type="eggNOG" id="KOG1782">
    <property type="taxonomic scope" value="Eukaryota"/>
</dbReference>
<dbReference type="GeneTree" id="ENSGT00730000111133"/>
<dbReference type="HOGENOM" id="CLU_076902_0_1_1"/>
<dbReference type="InParanoid" id="P47017"/>
<dbReference type="OMA" id="FMVRGEN"/>
<dbReference type="OrthoDB" id="10263346at2759"/>
<dbReference type="BioCyc" id="YEAST:G3O-31575-MONOMER"/>
<dbReference type="Reactome" id="R-SCE-430039">
    <property type="pathway name" value="mRNA decay by 5' to 3' exoribonuclease"/>
</dbReference>
<dbReference type="BioGRID-ORCS" id="853318">
    <property type="hits" value="1 hit in 10 CRISPR screens"/>
</dbReference>
<dbReference type="EvolutionaryTrace" id="P47017"/>
<dbReference type="PRO" id="PR:P47017"/>
<dbReference type="Proteomes" id="UP000002311">
    <property type="component" value="Chromosome X"/>
</dbReference>
<dbReference type="RNAct" id="P47017">
    <property type="molecule type" value="protein"/>
</dbReference>
<dbReference type="GO" id="GO:0005737">
    <property type="term" value="C:cytoplasm"/>
    <property type="evidence" value="ECO:0000314"/>
    <property type="project" value="SGD"/>
</dbReference>
<dbReference type="GO" id="GO:1990726">
    <property type="term" value="C:Lsm1-7-Pat1 complex"/>
    <property type="evidence" value="ECO:0000314"/>
    <property type="project" value="SGD"/>
</dbReference>
<dbReference type="GO" id="GO:0005634">
    <property type="term" value="C:nucleus"/>
    <property type="evidence" value="ECO:0000314"/>
    <property type="project" value="SGD"/>
</dbReference>
<dbReference type="GO" id="GO:0000932">
    <property type="term" value="C:P-body"/>
    <property type="evidence" value="ECO:0000314"/>
    <property type="project" value="ComplexPortal"/>
</dbReference>
<dbReference type="GO" id="GO:1990904">
    <property type="term" value="C:ribonucleoprotein complex"/>
    <property type="evidence" value="ECO:0007669"/>
    <property type="project" value="UniProtKB-KW"/>
</dbReference>
<dbReference type="GO" id="GO:0003682">
    <property type="term" value="F:chromatin binding"/>
    <property type="evidence" value="ECO:0000314"/>
    <property type="project" value="SGD"/>
</dbReference>
<dbReference type="GO" id="GO:0003729">
    <property type="term" value="F:mRNA binding"/>
    <property type="evidence" value="ECO:0000314"/>
    <property type="project" value="SGD"/>
</dbReference>
<dbReference type="GO" id="GO:0000290">
    <property type="term" value="P:deadenylation-dependent decapping of nuclear-transcribed mRNA"/>
    <property type="evidence" value="ECO:0000315"/>
    <property type="project" value="SGD"/>
</dbReference>
<dbReference type="GO" id="GO:0006397">
    <property type="term" value="P:mRNA processing"/>
    <property type="evidence" value="ECO:0007669"/>
    <property type="project" value="UniProtKB-KW"/>
</dbReference>
<dbReference type="GO" id="GO:0000288">
    <property type="term" value="P:nuclear-transcribed mRNA catabolic process, deadenylation-dependent decay"/>
    <property type="evidence" value="ECO:0000315"/>
    <property type="project" value="SGD"/>
</dbReference>
<dbReference type="CDD" id="cd01728">
    <property type="entry name" value="LSm1"/>
    <property type="match status" value="1"/>
</dbReference>
<dbReference type="FunFam" id="2.30.30.100:FF:000045">
    <property type="entry name" value="U6 snRNA-associated Sm-like protein LSm1"/>
    <property type="match status" value="1"/>
</dbReference>
<dbReference type="Gene3D" id="2.30.30.100">
    <property type="match status" value="1"/>
</dbReference>
<dbReference type="InterPro" id="IPR034104">
    <property type="entry name" value="Lsm1"/>
</dbReference>
<dbReference type="InterPro" id="IPR010920">
    <property type="entry name" value="LSM_dom_sf"/>
</dbReference>
<dbReference type="InterPro" id="IPR044642">
    <property type="entry name" value="PTHR15588"/>
</dbReference>
<dbReference type="InterPro" id="IPR047575">
    <property type="entry name" value="Sm"/>
</dbReference>
<dbReference type="InterPro" id="IPR001163">
    <property type="entry name" value="Sm_dom_euk/arc"/>
</dbReference>
<dbReference type="PANTHER" id="PTHR15588">
    <property type="entry name" value="LSM1"/>
    <property type="match status" value="1"/>
</dbReference>
<dbReference type="PANTHER" id="PTHR15588:SF8">
    <property type="entry name" value="U6 SNRNA-ASSOCIATED SM-LIKE PROTEIN LSM1"/>
    <property type="match status" value="1"/>
</dbReference>
<dbReference type="Pfam" id="PF01423">
    <property type="entry name" value="LSM"/>
    <property type="match status" value="1"/>
</dbReference>
<dbReference type="SMART" id="SM00651">
    <property type="entry name" value="Sm"/>
    <property type="match status" value="1"/>
</dbReference>
<dbReference type="SUPFAM" id="SSF50182">
    <property type="entry name" value="Sm-like ribonucleoproteins"/>
    <property type="match status" value="1"/>
</dbReference>
<dbReference type="PROSITE" id="PS52002">
    <property type="entry name" value="SM"/>
    <property type="match status" value="1"/>
</dbReference>
<keyword id="KW-0002">3D-structure</keyword>
<keyword id="KW-0963">Cytoplasm</keyword>
<keyword id="KW-0507">mRNA processing</keyword>
<keyword id="KW-0539">Nucleus</keyword>
<keyword id="KW-1185">Reference proteome</keyword>
<keyword id="KW-0687">Ribonucleoprotein</keyword>
<keyword id="KW-0694">RNA-binding</keyword>
<gene>
    <name type="primary">LSM1</name>
    <name type="synonym">SPB8</name>
    <name type="ordered locus">YJL124C</name>
    <name type="ORF">J0714</name>
</gene>
<protein>
    <recommendedName>
        <fullName evidence="10">LSM1-LSM7 complex subunit LSM1</fullName>
    </recommendedName>
    <alternativeName>
        <fullName>SPB8 protein</fullName>
    </alternativeName>
</protein>
<name>LSM1_YEAST</name>
<reference key="1">
    <citation type="journal article" date="1996" name="Yeast">
        <title>Sequencing analysis of a 40.2 kb fragment of yeast chromosome X reveals 19 open reading frames including URA2 (5' end), TRK1, PBS2, SPT10, GCD14, RPE1, PHO86, NCA3, ASF1, CCT7, GZF3, two tRNA genes, three remnant delta elements and a Ty4 transposon.</title>
        <authorList>
            <person name="Cziepluch C."/>
            <person name="Kordes E."/>
            <person name="Pujol A."/>
            <person name="Jauniaux J.-C."/>
        </authorList>
    </citation>
    <scope>NUCLEOTIDE SEQUENCE [GENOMIC DNA]</scope>
    <source>
        <strain>ATCC 96604 / S288c / FY1679</strain>
    </source>
</reference>
<reference key="2">
    <citation type="journal article" date="1996" name="EMBO J.">
        <title>Complete nucleotide sequence of Saccharomyces cerevisiae chromosome X.</title>
        <authorList>
            <person name="Galibert F."/>
            <person name="Alexandraki D."/>
            <person name="Baur A."/>
            <person name="Boles E."/>
            <person name="Chalwatzis N."/>
            <person name="Chuat J.-C."/>
            <person name="Coster F."/>
            <person name="Cziepluch C."/>
            <person name="de Haan M."/>
            <person name="Domdey H."/>
            <person name="Durand P."/>
            <person name="Entian K.-D."/>
            <person name="Gatius M."/>
            <person name="Goffeau A."/>
            <person name="Grivell L.A."/>
            <person name="Hennemann A."/>
            <person name="Herbert C.J."/>
            <person name="Heumann K."/>
            <person name="Hilger F."/>
            <person name="Hollenberg C.P."/>
            <person name="Huang M.-E."/>
            <person name="Jacq C."/>
            <person name="Jauniaux J.-C."/>
            <person name="Katsoulou C."/>
            <person name="Kirchrath L."/>
            <person name="Kleine K."/>
            <person name="Kordes E."/>
            <person name="Koetter P."/>
            <person name="Liebl S."/>
            <person name="Louis E.J."/>
            <person name="Manus V."/>
            <person name="Mewes H.-W."/>
            <person name="Miosga T."/>
            <person name="Obermaier B."/>
            <person name="Perea J."/>
            <person name="Pohl T.M."/>
            <person name="Portetelle D."/>
            <person name="Pujol A."/>
            <person name="Purnelle B."/>
            <person name="Ramezani Rad M."/>
            <person name="Rasmussen S.W."/>
            <person name="Rose M."/>
            <person name="Rossau R."/>
            <person name="Schaaff-Gerstenschlaeger I."/>
            <person name="Smits P.H.M."/>
            <person name="Scarcez T."/>
            <person name="Soriano N."/>
            <person name="To Van D."/>
            <person name="Tzermia M."/>
            <person name="Van Broekhoven A."/>
            <person name="Vandenbol M."/>
            <person name="Wedler H."/>
            <person name="von Wettstein D."/>
            <person name="Wambutt R."/>
            <person name="Zagulski M."/>
            <person name="Zollner A."/>
            <person name="Karpfinger-Hartl L."/>
        </authorList>
    </citation>
    <scope>NUCLEOTIDE SEQUENCE [LARGE SCALE GENOMIC DNA]</scope>
    <source>
        <strain>ATCC 204508 / S288c</strain>
    </source>
</reference>
<reference key="3">
    <citation type="journal article" date="2014" name="G3 (Bethesda)">
        <title>The reference genome sequence of Saccharomyces cerevisiae: Then and now.</title>
        <authorList>
            <person name="Engel S.R."/>
            <person name="Dietrich F.S."/>
            <person name="Fisk D.G."/>
            <person name="Binkley G."/>
            <person name="Balakrishnan R."/>
            <person name="Costanzo M.C."/>
            <person name="Dwight S.S."/>
            <person name="Hitz B.C."/>
            <person name="Karra K."/>
            <person name="Nash R.S."/>
            <person name="Weng S."/>
            <person name="Wong E.D."/>
            <person name="Lloyd P."/>
            <person name="Skrzypek M.S."/>
            <person name="Miyasato S.R."/>
            <person name="Simison M."/>
            <person name="Cherry J.M."/>
        </authorList>
    </citation>
    <scope>GENOME REANNOTATION</scope>
    <source>
        <strain>ATCC 204508 / S288c</strain>
    </source>
</reference>
<reference key="4">
    <citation type="journal article" date="2007" name="Genome Res.">
        <title>Approaching a complete repository of sequence-verified protein-encoding clones for Saccharomyces cerevisiae.</title>
        <authorList>
            <person name="Hu Y."/>
            <person name="Rolfs A."/>
            <person name="Bhullar B."/>
            <person name="Murthy T.V.S."/>
            <person name="Zhu C."/>
            <person name="Berger M.F."/>
            <person name="Camargo A.A."/>
            <person name="Kelley F."/>
            <person name="McCarron S."/>
            <person name="Jepson D."/>
            <person name="Richardson A."/>
            <person name="Raphael J."/>
            <person name="Moreira D."/>
            <person name="Taycher E."/>
            <person name="Zuo D."/>
            <person name="Mohr S."/>
            <person name="Kane M.F."/>
            <person name="Williamson J."/>
            <person name="Simpson A.J.G."/>
            <person name="Bulyk M.L."/>
            <person name="Harlow E."/>
            <person name="Marsischky G."/>
            <person name="Kolodner R.D."/>
            <person name="LaBaer J."/>
        </authorList>
    </citation>
    <scope>NUCLEOTIDE SEQUENCE [GENOMIC DNA]</scope>
    <source>
        <strain>ATCC 204508 / S288c</strain>
    </source>
</reference>
<reference key="5">
    <citation type="journal article" date="1998" name="Mol. Cell. Biol.">
        <title>Capped mRNA degradation intermediates accumulate in the yeast spb8-2 mutant.</title>
        <authorList>
            <person name="Boeck R."/>
            <person name="Lapeyre B."/>
            <person name="Brown C.E."/>
            <person name="Sachs A.B."/>
        </authorList>
    </citation>
    <scope>CHARACTERIZATION</scope>
</reference>
<reference key="6">
    <citation type="journal article" date="2000" name="EMBO J.">
        <title>A Sm-like protein complex that participates in mRNA degradation.</title>
        <authorList>
            <person name="Bouveret E."/>
            <person name="Rigaut G."/>
            <person name="Shevchenko A."/>
            <person name="Wilm M."/>
            <person name="Seraphin B."/>
        </authorList>
    </citation>
    <scope>IDENTIFICATION IN THE LSM1-LSM7 COMPLEX</scope>
    <scope>ASSOCIATION OF THE LSM1-LSM7 COMPLEX WITH PAT1 AND XRN1</scope>
    <scope>FUNCTION OF THE LSM1-LSM7 COMPLEX</scope>
    <scope>IDENTIFICATION BY MASS SPECTROMETRY</scope>
</reference>
<reference key="7">
    <citation type="journal article" date="2000" name="Mol. Cell. Biol.">
        <title>The two proteins Pat1p (Mrt1p) and Spb8p interact in vivo, are required for mRNA decay, and are functionally linked to Pab1p.</title>
        <authorList>
            <person name="Bonnerot C."/>
            <person name="Boeck R."/>
            <person name="Lapeyre B."/>
        </authorList>
    </citation>
    <scope>FUNCTION</scope>
    <scope>INTERACTION WITH PAT1</scope>
</reference>
<reference key="8">
    <citation type="journal article" date="2000" name="Nature">
        <title>Yeast Sm-like proteins function in mRNA decapping and decay.</title>
        <authorList>
            <person name="Tharun S."/>
            <person name="He W."/>
            <person name="Mayes A.E."/>
            <person name="Lennertz P."/>
            <person name="Beggs J.D."/>
            <person name="Parker R."/>
        </authorList>
    </citation>
    <scope>FUNCTION OF THE LSM1-LSM7 COMPLEX</scope>
    <scope>SUBCELLULAR LOCATION</scope>
    <scope>INTERACTION WITH PAT1</scope>
</reference>
<reference key="9">
    <citation type="journal article" date="2003" name="Nature">
        <title>Global analysis of protein localization in budding yeast.</title>
        <authorList>
            <person name="Huh W.-K."/>
            <person name="Falvo J.V."/>
            <person name="Gerke L.C."/>
            <person name="Carroll A.S."/>
            <person name="Howson R.W."/>
            <person name="Weissman J.S."/>
            <person name="O'Shea E.K."/>
        </authorList>
    </citation>
    <scope>SUBCELLULAR LOCATION [LARGE SCALE ANALYSIS]</scope>
</reference>
<reference key="10">
    <citation type="journal article" date="2003" name="Nature">
        <title>Global analysis of protein expression in yeast.</title>
        <authorList>
            <person name="Ghaemmaghami S."/>
            <person name="Huh W.-K."/>
            <person name="Bower K."/>
            <person name="Howson R.W."/>
            <person name="Belle A."/>
            <person name="Dephoure N."/>
            <person name="O'Shea E.K."/>
            <person name="Weissman J.S."/>
        </authorList>
    </citation>
    <scope>LEVEL OF PROTEIN EXPRESSION [LARGE SCALE ANALYSIS]</scope>
</reference>
<reference key="11">
    <citation type="journal article" date="2018" name="PLoS Genet.">
        <title>The Lsm1-7/Pat1 complex binds to stress-activated mRNAs and modulates the response to hyperosmotic shock.</title>
        <authorList>
            <person name="Garre E."/>
            <person name="Pelechano V."/>
            <person name="Sanchez Del Pino M."/>
            <person name="Alepuz P."/>
            <person name="Sunnerhagen P."/>
        </authorList>
    </citation>
    <scope>FUNCTION</scope>
    <scope>DISRUPTION PHENOTYPE</scope>
</reference>
<reference key="12">
    <citation type="journal article" date="2013" name="Cell Rep.">
        <title>Architecture of the Lsm1-7-Pat1 complex: a conserved assembly in eukaryotic mRNA turnover.</title>
        <authorList>
            <person name="Sharif H."/>
            <person name="Conti E."/>
        </authorList>
    </citation>
    <scope>X-RAY CRYSTALLOGRAPHY (2.30 ANGSTROMS) OF 27-172 OF LSM1-LSM7 COMPLEX</scope>
    <scope>SUBUNIT</scope>
    <scope>INTERACTION WITH PAT1</scope>
</reference>
<reference key="13">
    <citation type="journal article" date="2014" name="Cell Res.">
        <title>Crystal structure and biochemical analysis of the heptameric Lsm1-7 complex.</title>
        <authorList>
            <person name="Zhou L."/>
            <person name="Zhou Y."/>
            <person name="Hang J."/>
            <person name="Wan R."/>
            <person name="Lu G."/>
            <person name="Yan C."/>
            <person name="Shi Y."/>
        </authorList>
    </citation>
    <scope>X-RAY CRYSTALLOGRAPHY (2.95 ANGSTROMS) OF LSM1-LSM7 COMPLEX</scope>
    <scope>SUBUNIT</scope>
    <scope>FUNCTION</scope>
    <scope>RNA-BINDING</scope>
    <scope>MUTAGENESIS OF ARG-105</scope>
</reference>
<feature type="chain" id="PRO_0000125553" description="LSM1-LSM7 complex subunit LSM1">
    <location>
        <begin position="1"/>
        <end position="172"/>
    </location>
</feature>
<feature type="domain" description="Sm" evidence="1">
    <location>
        <begin position="41"/>
        <end position="118"/>
    </location>
</feature>
<feature type="region of interest" description="Disordered" evidence="2">
    <location>
        <begin position="1"/>
        <end position="22"/>
    </location>
</feature>
<feature type="compositionally biased region" description="Basic and acidic residues" evidence="2">
    <location>
        <begin position="1"/>
        <end position="17"/>
    </location>
</feature>
<feature type="mutagenesis site" description="Slightly reduces affinity for poly-U RNA ends." evidence="8">
    <original>R</original>
    <variation>A</variation>
    <location>
        <position position="105"/>
    </location>
</feature>
<feature type="helix" evidence="13">
    <location>
        <begin position="42"/>
        <end position="47"/>
    </location>
</feature>
<feature type="strand" evidence="12">
    <location>
        <begin position="48"/>
        <end position="58"/>
    </location>
</feature>
<feature type="strand" evidence="12">
    <location>
        <begin position="63"/>
        <end position="71"/>
    </location>
</feature>
<feature type="strand" evidence="12">
    <location>
        <begin position="77"/>
        <end position="88"/>
    </location>
</feature>
<feature type="turn" evidence="12">
    <location>
        <begin position="89"/>
        <end position="92"/>
    </location>
</feature>
<feature type="strand" evidence="12">
    <location>
        <begin position="93"/>
        <end position="104"/>
    </location>
</feature>
<feature type="helix" evidence="12">
    <location>
        <begin position="106"/>
        <end position="108"/>
    </location>
</feature>
<feature type="strand" evidence="12">
    <location>
        <begin position="109"/>
        <end position="114"/>
    </location>
</feature>
<feature type="helix" evidence="12">
    <location>
        <begin position="117"/>
        <end position="125"/>
    </location>
</feature>
<feature type="strand" evidence="12">
    <location>
        <begin position="127"/>
        <end position="129"/>
    </location>
</feature>
<feature type="helix" evidence="12">
    <location>
        <begin position="132"/>
        <end position="158"/>
    </location>
</feature>
<feature type="turn" evidence="12">
    <location>
        <begin position="159"/>
        <end position="161"/>
    </location>
</feature>
<organism>
    <name type="scientific">Saccharomyces cerevisiae (strain ATCC 204508 / S288c)</name>
    <name type="common">Baker's yeast</name>
    <dbReference type="NCBI Taxonomy" id="559292"/>
    <lineage>
        <taxon>Eukaryota</taxon>
        <taxon>Fungi</taxon>
        <taxon>Dikarya</taxon>
        <taxon>Ascomycota</taxon>
        <taxon>Saccharomycotina</taxon>
        <taxon>Saccharomycetes</taxon>
        <taxon>Saccharomycetales</taxon>
        <taxon>Saccharomycetaceae</taxon>
        <taxon>Saccharomyces</taxon>
    </lineage>
</organism>
<accession>P47017</accession>
<accession>D6VW62</accession>
<sequence length="172" mass="20307">MSANSKDRNQSNQDAKRQQQNFPKKISEGEADLYLDQYNFTTTAAIVSSVDRKIFVLLRDGRMLFGVLRTFDQYANLILQDCVERIYFSEENKYAEEDRGIFMIRGENVVMLGEVDIDKEDQPLEAMERIPFKEAWLTKQKNDEKRFKEETHKGKKMARHGIVYDFHKSDMY</sequence>